<feature type="chain" id="PRO_0000124821" description="Endochitinase 2">
    <location>
        <begin position="1" status="less than"/>
        <end position="46" status="greater than"/>
    </location>
</feature>
<feature type="non-terminal residue">
    <location>
        <position position="1"/>
    </location>
</feature>
<feature type="non-terminal residue">
    <location>
        <position position="46"/>
    </location>
</feature>
<organism>
    <name type="scientific">Arachis hypogaea</name>
    <name type="common">Peanut</name>
    <dbReference type="NCBI Taxonomy" id="3818"/>
    <lineage>
        <taxon>Eukaryota</taxon>
        <taxon>Viridiplantae</taxon>
        <taxon>Streptophyta</taxon>
        <taxon>Embryophyta</taxon>
        <taxon>Tracheophyta</taxon>
        <taxon>Spermatophyta</taxon>
        <taxon>Magnoliopsida</taxon>
        <taxon>eudicotyledons</taxon>
        <taxon>Gunneridae</taxon>
        <taxon>Pentapetalae</taxon>
        <taxon>rosids</taxon>
        <taxon>fabids</taxon>
        <taxon>Fabales</taxon>
        <taxon>Fabaceae</taxon>
        <taxon>Papilionoideae</taxon>
        <taxon>50 kb inversion clade</taxon>
        <taxon>dalbergioids sensu lato</taxon>
        <taxon>Dalbergieae</taxon>
        <taxon>Pterocarpus clade</taxon>
        <taxon>Arachis</taxon>
    </lineage>
</organism>
<protein>
    <recommendedName>
        <fullName>Endochitinase 2</fullName>
        <shortName>CHIT 2</shortName>
        <ecNumber>3.2.1.14</ecNumber>
    </recommendedName>
</protein>
<dbReference type="EC" id="3.2.1.14"/>
<dbReference type="EMBL" id="X56889">
    <property type="protein sequence ID" value="CAA40208.1"/>
    <property type="molecule type" value="mRNA"/>
</dbReference>
<dbReference type="SMR" id="Q06014"/>
<dbReference type="CAZy" id="GH19">
    <property type="family name" value="Glycoside Hydrolase Family 19"/>
</dbReference>
<dbReference type="GO" id="GO:0008061">
    <property type="term" value="F:chitin binding"/>
    <property type="evidence" value="ECO:0007669"/>
    <property type="project" value="UniProtKB-KW"/>
</dbReference>
<dbReference type="GO" id="GO:0008843">
    <property type="term" value="F:endochitinase activity"/>
    <property type="evidence" value="ECO:0007669"/>
    <property type="project" value="UniProtKB-EC"/>
</dbReference>
<dbReference type="GO" id="GO:0016998">
    <property type="term" value="P:cell wall macromolecule catabolic process"/>
    <property type="evidence" value="ECO:0007669"/>
    <property type="project" value="InterPro"/>
</dbReference>
<dbReference type="GO" id="GO:0006032">
    <property type="term" value="P:chitin catabolic process"/>
    <property type="evidence" value="ECO:0007669"/>
    <property type="project" value="UniProtKB-KW"/>
</dbReference>
<dbReference type="GO" id="GO:0006952">
    <property type="term" value="P:defense response"/>
    <property type="evidence" value="ECO:0007669"/>
    <property type="project" value="UniProtKB-KW"/>
</dbReference>
<dbReference type="GO" id="GO:0000272">
    <property type="term" value="P:polysaccharide catabolic process"/>
    <property type="evidence" value="ECO:0007669"/>
    <property type="project" value="UniProtKB-KW"/>
</dbReference>
<dbReference type="Gene3D" id="1.10.530.10">
    <property type="match status" value="1"/>
</dbReference>
<dbReference type="InterPro" id="IPR000726">
    <property type="entry name" value="Glyco_hydro_19_cat"/>
</dbReference>
<dbReference type="InterPro" id="IPR023346">
    <property type="entry name" value="Lysozyme-like_dom_sf"/>
</dbReference>
<dbReference type="Pfam" id="PF00182">
    <property type="entry name" value="Glyco_hydro_19"/>
    <property type="match status" value="1"/>
</dbReference>
<dbReference type="SUPFAM" id="SSF53955">
    <property type="entry name" value="Lysozyme-like"/>
    <property type="match status" value="1"/>
</dbReference>
<sequence length="46" mass="4892">MTEQKPKPSCHNVMVGNYVPTASDRAANRTLGFGLVTNIINGGLDC</sequence>
<proteinExistence type="evidence at transcript level"/>
<accession>Q06014</accession>
<evidence type="ECO:0000305" key="1"/>
<reference key="1">
    <citation type="journal article" date="1990" name="Mol. Gen. Genet.">
        <title>Elicitor-specific induction of one member of the chitinase gene family in Arachis hypogaea.</title>
        <authorList>
            <person name="Herget T."/>
            <person name="Schell J."/>
            <person name="Schreier P.H."/>
        </authorList>
    </citation>
    <scope>NUCLEOTIDE SEQUENCE [MRNA]</scope>
</reference>
<name>CHI2_ARAHY</name>
<keyword id="KW-0119">Carbohydrate metabolism</keyword>
<keyword id="KW-0146">Chitin degradation</keyword>
<keyword id="KW-0147">Chitin-binding</keyword>
<keyword id="KW-0326">Glycosidase</keyword>
<keyword id="KW-0378">Hydrolase</keyword>
<keyword id="KW-0611">Plant defense</keyword>
<keyword id="KW-0624">Polysaccharide degradation</keyword>
<comment type="function">
    <text>Defense against chitin-containing fungal and bacterial pathogens.</text>
</comment>
<comment type="catalytic activity">
    <reaction>
        <text>Random endo-hydrolysis of N-acetyl-beta-D-glucosaminide (1-&gt;4)-beta-linkages in chitin and chitodextrins.</text>
        <dbReference type="EC" id="3.2.1.14"/>
    </reaction>
</comment>
<comment type="induction">
    <text>By glucan and P.megasperma elicitors.</text>
</comment>
<comment type="similarity">
    <text evidence="1">Belongs to the glycosyl hydrolase 19 family. Chitinase class I subfamily.</text>
</comment>